<organism>
    <name type="scientific">Encephalitozoon cuniculi (strain GB-M1)</name>
    <name type="common">Microsporidian parasite</name>
    <dbReference type="NCBI Taxonomy" id="284813"/>
    <lineage>
        <taxon>Eukaryota</taxon>
        <taxon>Fungi</taxon>
        <taxon>Fungi incertae sedis</taxon>
        <taxon>Microsporidia</taxon>
        <taxon>Unikaryonidae</taxon>
        <taxon>Encephalitozoon</taxon>
    </lineage>
</organism>
<name>Y604_ENCCU</name>
<evidence type="ECO:0000256" key="1">
    <source>
        <dbReference type="SAM" id="MobiDB-lite"/>
    </source>
</evidence>
<evidence type="ECO:0000305" key="2"/>
<sequence length="426" mass="48437">MSEEEKKVYLEDWRSAKEWGGFLYSIERWERIAEVEKIVCNACKEICLGLREEELLGLLAEGGMKKTLKEEFSEDKAKDARYLEYIVVDDVLLLDAHREYGGEVTKELVRQMLLGKEGKDIDKRYVDRVAGVVRERQRKREEETERSVKELVGDEEKAKSKEEKAKSKEEKAKSKRGRKGKSASAPSEQEEEKKESEVEEAEQGGEVEALPVEVGGARSKGGKKKSKGGRKCFKIHRRVLRWTKSPEKIKEEWDKGSEERWKGRSLEEIKEQKIVHDITGVLELLRSEDADRFFMDAGKYRKGGSERQRMVAIGALETGGQRMTGVVEVGTFKDGDGCPVVYHLRFKPTSIGSIGDVINPGVVEASDVGRVDEGEECEDADKFVYPKGVRFETVKETGSFQIVWKNPSDTSEVLRRLIVYCRPCVI</sequence>
<feature type="chain" id="PRO_0000223161" description="UPF0329 protein ECU06_0040">
    <location>
        <begin position="1"/>
        <end position="426"/>
    </location>
</feature>
<feature type="region of interest" description="Disordered" evidence="1">
    <location>
        <begin position="136"/>
        <end position="230"/>
    </location>
</feature>
<feature type="compositionally biased region" description="Basic and acidic residues" evidence="1">
    <location>
        <begin position="136"/>
        <end position="172"/>
    </location>
</feature>
<feature type="compositionally biased region" description="Basic residues" evidence="1">
    <location>
        <begin position="220"/>
        <end position="230"/>
    </location>
</feature>
<reference key="1">
    <citation type="journal article" date="2001" name="Nature">
        <title>Genome sequence and gene compaction of the eukaryote parasite Encephalitozoon cuniculi.</title>
        <authorList>
            <person name="Katinka M.D."/>
            <person name="Duprat S."/>
            <person name="Cornillot E."/>
            <person name="Metenier G."/>
            <person name="Thomarat F."/>
            <person name="Prensier G."/>
            <person name="Barbe V."/>
            <person name="Peyretaillade E."/>
            <person name="Brottier P."/>
            <person name="Wincker P."/>
            <person name="Delbac F."/>
            <person name="El Alaoui H."/>
            <person name="Peyret P."/>
            <person name="Saurin W."/>
            <person name="Gouy M."/>
            <person name="Weissenbach J."/>
            <person name="Vivares C.P."/>
        </authorList>
    </citation>
    <scope>NUCLEOTIDE SEQUENCE [LARGE SCALE GENOMIC DNA]</scope>
    <source>
        <strain>GB-M1</strain>
    </source>
</reference>
<reference key="2">
    <citation type="journal article" date="2009" name="BMC Genomics">
        <title>Identification of transcriptional signals in Encephalitozoon cuniculi widespread among Microsporidia phylum: support for accurate structural genome annotation.</title>
        <authorList>
            <person name="Peyretaillade E."/>
            <person name="Goncalves O."/>
            <person name="Terrat S."/>
            <person name="Dugat-Bony E."/>
            <person name="Wincker P."/>
            <person name="Cornman R.S."/>
            <person name="Evans J.D."/>
            <person name="Delbac F."/>
            <person name="Peyret P."/>
        </authorList>
    </citation>
    <scope>GENOME REANNOTATION</scope>
    <source>
        <strain>GB-M1</strain>
    </source>
</reference>
<keyword id="KW-1185">Reference proteome</keyword>
<accession>Q8SVF8</accession>
<proteinExistence type="inferred from homology"/>
<dbReference type="EMBL" id="AL590446">
    <property type="protein sequence ID" value="CAD25364.2"/>
    <property type="molecule type" value="Genomic_DNA"/>
</dbReference>
<dbReference type="RefSeq" id="NP_585760.2">
    <property type="nucleotide sequence ID" value="NM_001041382.2"/>
</dbReference>
<dbReference type="SMR" id="Q8SVF8"/>
<dbReference type="STRING" id="284813.Q8SVF8"/>
<dbReference type="GeneID" id="859183"/>
<dbReference type="KEGG" id="ecu:ECU06_0040"/>
<dbReference type="VEuPathDB" id="MicrosporidiaDB:ECU06_0040"/>
<dbReference type="HOGENOM" id="CLU_035434_0_0_1"/>
<dbReference type="InParanoid" id="Q8SVF8"/>
<dbReference type="OrthoDB" id="2162691at2759"/>
<dbReference type="Proteomes" id="UP000000819">
    <property type="component" value="Chromosome VI"/>
</dbReference>
<dbReference type="InterPro" id="IPR022115">
    <property type="entry name" value="DUF3654"/>
</dbReference>
<dbReference type="InterPro" id="IPR011667">
    <property type="entry name" value="UPF0329"/>
</dbReference>
<dbReference type="Pfam" id="PF07753">
    <property type="entry name" value="DUF1609"/>
    <property type="match status" value="1"/>
</dbReference>
<dbReference type="Pfam" id="PF12376">
    <property type="entry name" value="DUF3654"/>
    <property type="match status" value="1"/>
</dbReference>
<comment type="similarity">
    <text evidence="2">Belongs to the UPF0329 family.</text>
</comment>
<protein>
    <recommendedName>
        <fullName>UPF0329 protein ECU06_0040</fullName>
    </recommendedName>
</protein>
<gene>
    <name type="ordered locus">ECU06_0040</name>
</gene>